<sequence length="515" mass="55011">MTLPPPPSRLKPPRNTSSLSLRWRVMLLAMSMVAMVVVLMSVAVYAVVSRALYDDIDNQLHSRARLLIESGSLAADPGKAIEGTAYSDVNAMLVNPGRSIYTANQQGQTLPLGEAEKDVISGELLLSLRTANHQRILAVHLTNGSSLLISKSLAPTGQVLGRLGTVLLIVGGVGVAVAAIAGGMVARAGLRPVGRLTQAAERVARTDDLRPIPVFGSDELARLTEAFNMMLRALTESRERQARLVSDAGHELRTPLTSLRTNVELLMASQAPGAPRLPEEEMAGLRADVIAQIEELSTLVGDLVDLTRDEAGGVVYETVDMAEVVDRSLERVRRRRNDIEFDVNVVGWQVYGDAAGLARAVLNLLDNAAKWSPPGGRVGVRLTQTDPVHAELVVSDQGPGIPEAERRLVFERFYRSTAARAMPGSGLGLAIVKQVVLKHGGALRVEDTVPGGNPPGTSFYVMLPGRPLTPGGNGTAPVPAAQFDPDMRSAGSRADRRVIKNTETNGKSRSASKEL</sequence>
<dbReference type="EC" id="2.7.13.3"/>
<dbReference type="EC" id="3.1.3.-"/>
<dbReference type="EMBL" id="CP000384">
    <property type="protein sequence ID" value="ABG10405.1"/>
    <property type="molecule type" value="Genomic_DNA"/>
</dbReference>
<dbReference type="SMR" id="Q1B3X9"/>
<dbReference type="KEGG" id="mmc:Mmcs_4300"/>
<dbReference type="HOGENOM" id="CLU_000445_89_6_11"/>
<dbReference type="BioCyc" id="MSP164756:G1G6O-4393-MONOMER"/>
<dbReference type="GO" id="GO:0005886">
    <property type="term" value="C:plasma membrane"/>
    <property type="evidence" value="ECO:0007669"/>
    <property type="project" value="UniProtKB-SubCell"/>
</dbReference>
<dbReference type="GO" id="GO:0005524">
    <property type="term" value="F:ATP binding"/>
    <property type="evidence" value="ECO:0007669"/>
    <property type="project" value="UniProtKB-KW"/>
</dbReference>
<dbReference type="GO" id="GO:0004721">
    <property type="term" value="F:phosphoprotein phosphatase activity"/>
    <property type="evidence" value="ECO:0007669"/>
    <property type="project" value="UniProtKB-KW"/>
</dbReference>
<dbReference type="GO" id="GO:0000155">
    <property type="term" value="F:phosphorelay sensor kinase activity"/>
    <property type="evidence" value="ECO:0007669"/>
    <property type="project" value="InterPro"/>
</dbReference>
<dbReference type="CDD" id="cd06225">
    <property type="entry name" value="HAMP"/>
    <property type="match status" value="1"/>
</dbReference>
<dbReference type="CDD" id="cd00075">
    <property type="entry name" value="HATPase"/>
    <property type="match status" value="1"/>
</dbReference>
<dbReference type="CDD" id="cd00082">
    <property type="entry name" value="HisKA"/>
    <property type="match status" value="1"/>
</dbReference>
<dbReference type="FunFam" id="3.30.565.10:FF:000066">
    <property type="entry name" value="Two-component sensor kinase MprB"/>
    <property type="match status" value="1"/>
</dbReference>
<dbReference type="Gene3D" id="1.10.287.130">
    <property type="match status" value="1"/>
</dbReference>
<dbReference type="Gene3D" id="6.10.340.10">
    <property type="match status" value="1"/>
</dbReference>
<dbReference type="Gene3D" id="3.30.565.10">
    <property type="entry name" value="Histidine kinase-like ATPase, C-terminal domain"/>
    <property type="match status" value="1"/>
</dbReference>
<dbReference type="InterPro" id="IPR050980">
    <property type="entry name" value="2C_sensor_his_kinase"/>
</dbReference>
<dbReference type="InterPro" id="IPR003660">
    <property type="entry name" value="HAMP_dom"/>
</dbReference>
<dbReference type="InterPro" id="IPR036890">
    <property type="entry name" value="HATPase_C_sf"/>
</dbReference>
<dbReference type="InterPro" id="IPR005467">
    <property type="entry name" value="His_kinase_dom"/>
</dbReference>
<dbReference type="InterPro" id="IPR003661">
    <property type="entry name" value="HisK_dim/P_dom"/>
</dbReference>
<dbReference type="InterPro" id="IPR036097">
    <property type="entry name" value="HisK_dim/P_sf"/>
</dbReference>
<dbReference type="InterPro" id="IPR004358">
    <property type="entry name" value="Sig_transdc_His_kin-like_C"/>
</dbReference>
<dbReference type="PANTHER" id="PTHR44936">
    <property type="entry name" value="SENSOR PROTEIN CREC"/>
    <property type="match status" value="1"/>
</dbReference>
<dbReference type="PANTHER" id="PTHR44936:SF9">
    <property type="entry name" value="SENSOR PROTEIN CREC"/>
    <property type="match status" value="1"/>
</dbReference>
<dbReference type="Pfam" id="PF00672">
    <property type="entry name" value="HAMP"/>
    <property type="match status" value="1"/>
</dbReference>
<dbReference type="Pfam" id="PF02518">
    <property type="entry name" value="HATPase_c"/>
    <property type="match status" value="1"/>
</dbReference>
<dbReference type="Pfam" id="PF00512">
    <property type="entry name" value="HisKA"/>
    <property type="match status" value="1"/>
</dbReference>
<dbReference type="PRINTS" id="PR00344">
    <property type="entry name" value="BCTRLSENSOR"/>
</dbReference>
<dbReference type="SMART" id="SM00304">
    <property type="entry name" value="HAMP"/>
    <property type="match status" value="1"/>
</dbReference>
<dbReference type="SMART" id="SM00387">
    <property type="entry name" value="HATPase_c"/>
    <property type="match status" value="1"/>
</dbReference>
<dbReference type="SMART" id="SM00388">
    <property type="entry name" value="HisKA"/>
    <property type="match status" value="1"/>
</dbReference>
<dbReference type="SUPFAM" id="SSF55874">
    <property type="entry name" value="ATPase domain of HSP90 chaperone/DNA topoisomerase II/histidine kinase"/>
    <property type="match status" value="1"/>
</dbReference>
<dbReference type="SUPFAM" id="SSF158472">
    <property type="entry name" value="HAMP domain-like"/>
    <property type="match status" value="1"/>
</dbReference>
<dbReference type="SUPFAM" id="SSF47384">
    <property type="entry name" value="Homodimeric domain of signal transducing histidine kinase"/>
    <property type="match status" value="1"/>
</dbReference>
<dbReference type="PROSITE" id="PS50885">
    <property type="entry name" value="HAMP"/>
    <property type="match status" value="1"/>
</dbReference>
<dbReference type="PROSITE" id="PS50109">
    <property type="entry name" value="HIS_KIN"/>
    <property type="match status" value="1"/>
</dbReference>
<evidence type="ECO:0000250" key="1"/>
<evidence type="ECO:0000255" key="2"/>
<evidence type="ECO:0000255" key="3">
    <source>
        <dbReference type="PROSITE-ProRule" id="PRU00102"/>
    </source>
</evidence>
<evidence type="ECO:0000255" key="4">
    <source>
        <dbReference type="PROSITE-ProRule" id="PRU00107"/>
    </source>
</evidence>
<evidence type="ECO:0000256" key="5">
    <source>
        <dbReference type="SAM" id="MobiDB-lite"/>
    </source>
</evidence>
<evidence type="ECO:0000305" key="6"/>
<gene>
    <name type="primary">mprB</name>
    <name type="ordered locus">Mmcs_4300</name>
</gene>
<protein>
    <recommendedName>
        <fullName>Signal transduction histidine-protein kinase/phosphatase MprB</fullName>
        <ecNumber>2.7.13.3</ecNumber>
        <ecNumber>3.1.3.-</ecNumber>
    </recommendedName>
    <alternativeName>
        <fullName>Mycobacterial persistence regulator B</fullName>
    </alternativeName>
</protein>
<reference key="1">
    <citation type="submission" date="2006-06" db="EMBL/GenBank/DDBJ databases">
        <title>Complete sequence of chromosome of Mycobacterium sp. MCS.</title>
        <authorList>
            <consortium name="US DOE Joint Genome Institute"/>
            <person name="Copeland A."/>
            <person name="Lucas S."/>
            <person name="Lapidus A."/>
            <person name="Barry K."/>
            <person name="Detter J.C."/>
            <person name="Glavina del Rio T."/>
            <person name="Hammon N."/>
            <person name="Israni S."/>
            <person name="Dalin E."/>
            <person name="Tice H."/>
            <person name="Pitluck S."/>
            <person name="Martinez M."/>
            <person name="Schmutz J."/>
            <person name="Larimer F."/>
            <person name="Land M."/>
            <person name="Hauser L."/>
            <person name="Kyrpides N."/>
            <person name="Kim E."/>
            <person name="Miller C.D."/>
            <person name="Hughes J.E."/>
            <person name="Anderson A.J."/>
            <person name="Sims R.C."/>
            <person name="Richardson P."/>
        </authorList>
    </citation>
    <scope>NUCLEOTIDE SEQUENCE [LARGE SCALE GENOMIC DNA]</scope>
    <source>
        <strain>MCS</strain>
    </source>
</reference>
<comment type="function">
    <text evidence="1">Member of the two-component regulatory system MprB/MprA which contributes to maintaining a balance among several systems involved in stress resistance and is required for establishment and maintenance of persistent infection in the host. In response to environmental signals MprB acts both as a membrane-associated protein kinase that undergoes autophosphorylation and subsequently transfers the phosphate to MprA, and a protein phosphatase that dephosphorylates phospho-MprA (By similarity).</text>
</comment>
<comment type="catalytic activity">
    <reaction>
        <text>ATP + protein L-histidine = ADP + protein N-phospho-L-histidine.</text>
        <dbReference type="EC" id="2.7.13.3"/>
    </reaction>
</comment>
<comment type="cofactor">
    <cofactor evidence="1">
        <name>Mg(2+)</name>
        <dbReference type="ChEBI" id="CHEBI:18420"/>
    </cofactor>
    <cofactor evidence="1">
        <name>Mn(2+)</name>
        <dbReference type="ChEBI" id="CHEBI:29035"/>
    </cofactor>
</comment>
<comment type="subcellular location">
    <subcellularLocation>
        <location evidence="6">Cell membrane</location>
        <topology evidence="6">Multi-pass membrane protein</topology>
    </subcellularLocation>
</comment>
<comment type="PTM">
    <text evidence="1">Autophosphorylated.</text>
</comment>
<feature type="chain" id="PRO_0000308439" description="Signal transduction histidine-protein kinase/phosphatase MprB">
    <location>
        <begin position="1"/>
        <end position="515"/>
    </location>
</feature>
<feature type="topological domain" description="Cytoplasmic" evidence="2">
    <location>
        <begin position="1"/>
        <end position="24"/>
    </location>
</feature>
<feature type="transmembrane region" description="Helical" evidence="2">
    <location>
        <begin position="25"/>
        <end position="45"/>
    </location>
</feature>
<feature type="topological domain" description="Extracellular" evidence="2">
    <location>
        <begin position="46"/>
        <end position="165"/>
    </location>
</feature>
<feature type="transmembrane region" description="Helical" evidence="2">
    <location>
        <begin position="166"/>
        <end position="186"/>
    </location>
</feature>
<feature type="topological domain" description="Cytoplasmic" evidence="2">
    <location>
        <begin position="187"/>
        <end position="515"/>
    </location>
</feature>
<feature type="domain" description="HAMP" evidence="3">
    <location>
        <begin position="187"/>
        <end position="239"/>
    </location>
</feature>
<feature type="domain" description="Histidine kinase" evidence="4">
    <location>
        <begin position="247"/>
        <end position="467"/>
    </location>
</feature>
<feature type="region of interest" description="Disordered" evidence="5">
    <location>
        <begin position="468"/>
        <end position="515"/>
    </location>
</feature>
<feature type="modified residue" description="Phosphohistidine; by autocatalysis" evidence="4">
    <location>
        <position position="250"/>
    </location>
</feature>
<accession>Q1B3X9</accession>
<name>MPRB_MYCSS</name>
<keyword id="KW-0067">ATP-binding</keyword>
<keyword id="KW-1003">Cell membrane</keyword>
<keyword id="KW-0378">Hydrolase</keyword>
<keyword id="KW-0418">Kinase</keyword>
<keyword id="KW-0460">Magnesium</keyword>
<keyword id="KW-0464">Manganese</keyword>
<keyword id="KW-0472">Membrane</keyword>
<keyword id="KW-0547">Nucleotide-binding</keyword>
<keyword id="KW-0597">Phosphoprotein</keyword>
<keyword id="KW-0904">Protein phosphatase</keyword>
<keyword id="KW-0346">Stress response</keyword>
<keyword id="KW-0808">Transferase</keyword>
<keyword id="KW-0812">Transmembrane</keyword>
<keyword id="KW-1133">Transmembrane helix</keyword>
<keyword id="KW-0902">Two-component regulatory system</keyword>
<keyword id="KW-0843">Virulence</keyword>
<organism>
    <name type="scientific">Mycobacterium sp. (strain MCS)</name>
    <dbReference type="NCBI Taxonomy" id="164756"/>
    <lineage>
        <taxon>Bacteria</taxon>
        <taxon>Bacillati</taxon>
        <taxon>Actinomycetota</taxon>
        <taxon>Actinomycetes</taxon>
        <taxon>Mycobacteriales</taxon>
        <taxon>Mycobacteriaceae</taxon>
        <taxon>Mycobacterium</taxon>
    </lineage>
</organism>
<proteinExistence type="inferred from homology"/>